<name>RSGA_ONYPE</name>
<comment type="function">
    <text evidence="1">One of several proteins that assist in the late maturation steps of the functional core of the 30S ribosomal subunit. Helps release RbfA from mature subunits. May play a role in the assembly of ribosomal proteins into the subunit. Circularly permuted GTPase that catalyzes slow GTP hydrolysis, GTPase activity is stimulated by the 30S ribosomal subunit.</text>
</comment>
<comment type="cofactor">
    <cofactor evidence="1">
        <name>Zn(2+)</name>
        <dbReference type="ChEBI" id="CHEBI:29105"/>
    </cofactor>
    <text evidence="1">Binds 1 zinc ion per subunit.</text>
</comment>
<comment type="subunit">
    <text evidence="1">Monomer. Associates with 30S ribosomal subunit, binds 16S rRNA.</text>
</comment>
<comment type="subcellular location">
    <subcellularLocation>
        <location evidence="1">Cytoplasm</location>
    </subcellularLocation>
</comment>
<comment type="similarity">
    <text evidence="1">Belongs to the TRAFAC class YlqF/YawG GTPase family. RsgA subfamily.</text>
</comment>
<keyword id="KW-0963">Cytoplasm</keyword>
<keyword id="KW-0342">GTP-binding</keyword>
<keyword id="KW-0378">Hydrolase</keyword>
<keyword id="KW-0479">Metal-binding</keyword>
<keyword id="KW-0547">Nucleotide-binding</keyword>
<keyword id="KW-0690">Ribosome biogenesis</keyword>
<keyword id="KW-0694">RNA-binding</keyword>
<keyword id="KW-0699">rRNA-binding</keyword>
<keyword id="KW-0862">Zinc</keyword>
<gene>
    <name evidence="1" type="primary">rsgA</name>
    <name type="synonym">pam182</name>
    <name type="ordered locus">PAM_182</name>
</gene>
<reference key="1">
    <citation type="journal article" date="2004" name="Nat. Genet.">
        <title>Reductive evolution suggested from the complete genome sequence of a plant-pathogenic phytoplasma.</title>
        <authorList>
            <person name="Oshima K."/>
            <person name="Kakizawa S."/>
            <person name="Nishigawa H."/>
            <person name="Jung H.-Y."/>
            <person name="Wei W."/>
            <person name="Suzuki S."/>
            <person name="Arashida R."/>
            <person name="Nakata D."/>
            <person name="Miyata S."/>
            <person name="Ugaki M."/>
            <person name="Namba S."/>
        </authorList>
    </citation>
    <scope>NUCLEOTIDE SEQUENCE [LARGE SCALE GENOMIC DNA]</scope>
    <source>
        <strain>OY-M</strain>
    </source>
</reference>
<evidence type="ECO:0000255" key="1">
    <source>
        <dbReference type="HAMAP-Rule" id="MF_01820"/>
    </source>
</evidence>
<evidence type="ECO:0000255" key="2">
    <source>
        <dbReference type="PROSITE-ProRule" id="PRU01058"/>
    </source>
</evidence>
<organism>
    <name type="scientific">Onion yellows phytoplasma (strain OY-M)</name>
    <dbReference type="NCBI Taxonomy" id="262768"/>
    <lineage>
        <taxon>Bacteria</taxon>
        <taxon>Bacillati</taxon>
        <taxon>Mycoplasmatota</taxon>
        <taxon>Mollicutes</taxon>
        <taxon>Acholeplasmatales</taxon>
        <taxon>Acholeplasmataceae</taxon>
        <taxon>Candidatus Phytoplasma</taxon>
        <taxon>16SrI (Aster yellows group)</taxon>
    </lineage>
</organism>
<accession>Q6YR36</accession>
<protein>
    <recommendedName>
        <fullName evidence="1">Small ribosomal subunit biogenesis GTPase RsgA</fullName>
        <ecNumber evidence="1">3.6.1.-</ecNumber>
    </recommendedName>
</protein>
<feature type="chain" id="PRO_1000216045" description="Small ribosomal subunit biogenesis GTPase RsgA">
    <location>
        <begin position="1"/>
        <end position="306"/>
    </location>
</feature>
<feature type="domain" description="CP-type G" evidence="2">
    <location>
        <begin position="77"/>
        <end position="236"/>
    </location>
</feature>
<feature type="binding site" evidence="1">
    <location>
        <begin position="126"/>
        <end position="129"/>
    </location>
    <ligand>
        <name>GTP</name>
        <dbReference type="ChEBI" id="CHEBI:37565"/>
    </ligand>
</feature>
<feature type="binding site" evidence="1">
    <location>
        <begin position="179"/>
        <end position="187"/>
    </location>
    <ligand>
        <name>GTP</name>
        <dbReference type="ChEBI" id="CHEBI:37565"/>
    </ligand>
</feature>
<feature type="binding site" evidence="1">
    <location>
        <position position="260"/>
    </location>
    <ligand>
        <name>Zn(2+)</name>
        <dbReference type="ChEBI" id="CHEBI:29105"/>
    </ligand>
</feature>
<feature type="binding site" evidence="1">
    <location>
        <position position="266"/>
    </location>
    <ligand>
        <name>Zn(2+)</name>
        <dbReference type="ChEBI" id="CHEBI:29105"/>
    </ligand>
</feature>
<feature type="binding site" evidence="1">
    <location>
        <position position="268"/>
    </location>
    <ligand>
        <name>Zn(2+)</name>
        <dbReference type="ChEBI" id="CHEBI:29105"/>
    </ligand>
</feature>
<feature type="binding site" evidence="1">
    <location>
        <position position="274"/>
    </location>
    <ligand>
        <name>Zn(2+)</name>
        <dbReference type="ChEBI" id="CHEBI:29105"/>
    </ligand>
</feature>
<dbReference type="EC" id="3.6.1.-" evidence="1"/>
<dbReference type="EMBL" id="AP006628">
    <property type="protein sequence ID" value="BAD04267.1"/>
    <property type="molecule type" value="Genomic_DNA"/>
</dbReference>
<dbReference type="SMR" id="Q6YR36"/>
<dbReference type="STRING" id="262768.PAM_182"/>
<dbReference type="KEGG" id="poy:PAM_182"/>
<dbReference type="eggNOG" id="COG1162">
    <property type="taxonomic scope" value="Bacteria"/>
</dbReference>
<dbReference type="HOGENOM" id="CLU_033617_2_1_14"/>
<dbReference type="BioCyc" id="OYEL262768:G1G26-223-MONOMER"/>
<dbReference type="Proteomes" id="UP000002523">
    <property type="component" value="Chromosome"/>
</dbReference>
<dbReference type="GO" id="GO:0005737">
    <property type="term" value="C:cytoplasm"/>
    <property type="evidence" value="ECO:0007669"/>
    <property type="project" value="UniProtKB-SubCell"/>
</dbReference>
<dbReference type="GO" id="GO:0005525">
    <property type="term" value="F:GTP binding"/>
    <property type="evidence" value="ECO:0007669"/>
    <property type="project" value="UniProtKB-UniRule"/>
</dbReference>
<dbReference type="GO" id="GO:0003924">
    <property type="term" value="F:GTPase activity"/>
    <property type="evidence" value="ECO:0007669"/>
    <property type="project" value="UniProtKB-UniRule"/>
</dbReference>
<dbReference type="GO" id="GO:0046872">
    <property type="term" value="F:metal ion binding"/>
    <property type="evidence" value="ECO:0007669"/>
    <property type="project" value="UniProtKB-KW"/>
</dbReference>
<dbReference type="GO" id="GO:0019843">
    <property type="term" value="F:rRNA binding"/>
    <property type="evidence" value="ECO:0007669"/>
    <property type="project" value="UniProtKB-KW"/>
</dbReference>
<dbReference type="GO" id="GO:0042274">
    <property type="term" value="P:ribosomal small subunit biogenesis"/>
    <property type="evidence" value="ECO:0007669"/>
    <property type="project" value="UniProtKB-UniRule"/>
</dbReference>
<dbReference type="CDD" id="cd01854">
    <property type="entry name" value="YjeQ_EngC"/>
    <property type="match status" value="1"/>
</dbReference>
<dbReference type="Gene3D" id="3.40.50.300">
    <property type="entry name" value="P-loop containing nucleotide triphosphate hydrolases"/>
    <property type="match status" value="1"/>
</dbReference>
<dbReference type="Gene3D" id="1.10.40.50">
    <property type="entry name" value="Probable gtpase engc, domain 3"/>
    <property type="match status" value="1"/>
</dbReference>
<dbReference type="HAMAP" id="MF_01820">
    <property type="entry name" value="GTPase_RsgA"/>
    <property type="match status" value="1"/>
</dbReference>
<dbReference type="InterPro" id="IPR030378">
    <property type="entry name" value="G_CP_dom"/>
</dbReference>
<dbReference type="InterPro" id="IPR027417">
    <property type="entry name" value="P-loop_NTPase"/>
</dbReference>
<dbReference type="InterPro" id="IPR004881">
    <property type="entry name" value="Ribosome_biogen_GTPase_RsgA"/>
</dbReference>
<dbReference type="InterPro" id="IPR010914">
    <property type="entry name" value="RsgA_GTPase_dom"/>
</dbReference>
<dbReference type="NCBIfam" id="TIGR00157">
    <property type="entry name" value="ribosome small subunit-dependent GTPase A"/>
    <property type="match status" value="1"/>
</dbReference>
<dbReference type="PANTHER" id="PTHR32120">
    <property type="entry name" value="SMALL RIBOSOMAL SUBUNIT BIOGENESIS GTPASE RSGA"/>
    <property type="match status" value="1"/>
</dbReference>
<dbReference type="PANTHER" id="PTHR32120:SF11">
    <property type="entry name" value="SMALL RIBOSOMAL SUBUNIT BIOGENESIS GTPASE RSGA 1, MITOCHONDRIAL-RELATED"/>
    <property type="match status" value="1"/>
</dbReference>
<dbReference type="Pfam" id="PF03193">
    <property type="entry name" value="RsgA_GTPase"/>
    <property type="match status" value="1"/>
</dbReference>
<dbReference type="SUPFAM" id="SSF52540">
    <property type="entry name" value="P-loop containing nucleoside triphosphate hydrolases"/>
    <property type="match status" value="1"/>
</dbReference>
<dbReference type="PROSITE" id="PS50936">
    <property type="entry name" value="ENGC_GTPASE"/>
    <property type="match status" value="1"/>
</dbReference>
<dbReference type="PROSITE" id="PS51721">
    <property type="entry name" value="G_CP"/>
    <property type="match status" value="1"/>
</dbReference>
<proteinExistence type="inferred from homology"/>
<sequence>MEKALVLRFLAGVYYIKDLETQIILEAKKRGKLKTPDIKTTQKENSSASDFIIKVGDIVFYELSCDTYLIQSILPRKNELKRPNVANIDQVLLVFSLVKPNFQFLLLDKFLLILEQQKLDVVLVFSKIDLLEPENLTTMQQQLSYYQKFQPFYYINSKQKIGIDALKHIFANQITVLAGQTGVGKSTLLKALIPDAKLKTQEISESLGRGKHTTKNAQLYEFNGGFIVDTPGFSKLDLTTFCPRTLKNFYPDFVEHVCDCFFGESCLHLQEEKCGVKKSLENGKILPSRYQNYVSFYEEIKNQLKY</sequence>